<feature type="chain" id="PRO_0000072079" description="Stage V sporulation protein AB">
    <location>
        <begin position="1"/>
        <end position="141"/>
    </location>
</feature>
<feature type="transmembrane region" description="Helical" evidence="1">
    <location>
        <begin position="7"/>
        <end position="27"/>
    </location>
</feature>
<feature type="transmembrane region" description="Helical" evidence="1">
    <location>
        <begin position="45"/>
        <end position="65"/>
    </location>
</feature>
<feature type="transmembrane region" description="Helical" evidence="1">
    <location>
        <begin position="75"/>
        <end position="95"/>
    </location>
</feature>
<feature type="transmembrane region" description="Helical" evidence="1">
    <location>
        <begin position="115"/>
        <end position="135"/>
    </location>
</feature>
<organism>
    <name type="scientific">Bacillus subtilis (strain 168)</name>
    <dbReference type="NCBI Taxonomy" id="224308"/>
    <lineage>
        <taxon>Bacteria</taxon>
        <taxon>Bacillati</taxon>
        <taxon>Bacillota</taxon>
        <taxon>Bacilli</taxon>
        <taxon>Bacillales</taxon>
        <taxon>Bacillaceae</taxon>
        <taxon>Bacillus</taxon>
    </lineage>
</organism>
<evidence type="ECO:0000255" key="1"/>
<evidence type="ECO:0000305" key="2"/>
<dbReference type="EMBL" id="M15349">
    <property type="status" value="NOT_ANNOTATED_CDS"/>
    <property type="molecule type" value="Genomic_DNA"/>
</dbReference>
<dbReference type="EMBL" id="D84432">
    <property type="protein sequence ID" value="BAA12657.1"/>
    <property type="molecule type" value="Genomic_DNA"/>
</dbReference>
<dbReference type="EMBL" id="AL009126">
    <property type="protein sequence ID" value="CAB14275.1"/>
    <property type="molecule type" value="Genomic_DNA"/>
</dbReference>
<dbReference type="PIR" id="E69714">
    <property type="entry name" value="E69714"/>
</dbReference>
<dbReference type="RefSeq" id="NP_390224.1">
    <property type="nucleotide sequence ID" value="NC_000964.3"/>
</dbReference>
<dbReference type="RefSeq" id="WP_003230463.1">
    <property type="nucleotide sequence ID" value="NZ_OZ025638.1"/>
</dbReference>
<dbReference type="SMR" id="P40867"/>
<dbReference type="FunCoup" id="P40867">
    <property type="interactions" value="43"/>
</dbReference>
<dbReference type="STRING" id="224308.BSU23430"/>
<dbReference type="TCDB" id="9.A.11.1.1">
    <property type="family name" value="the dipicolinic acid transporter (dpa-t) family"/>
</dbReference>
<dbReference type="PaxDb" id="224308-BSU23430"/>
<dbReference type="EnsemblBacteria" id="CAB14275">
    <property type="protein sequence ID" value="CAB14275"/>
    <property type="gene ID" value="BSU_23430"/>
</dbReference>
<dbReference type="GeneID" id="86873116"/>
<dbReference type="GeneID" id="938933"/>
<dbReference type="KEGG" id="bsu:BSU23430"/>
<dbReference type="PATRIC" id="fig|224308.179.peg.2553"/>
<dbReference type="eggNOG" id="ENOG503152T">
    <property type="taxonomic scope" value="Bacteria"/>
</dbReference>
<dbReference type="InParanoid" id="P40867"/>
<dbReference type="OrthoDB" id="9790504at2"/>
<dbReference type="BioCyc" id="BSUB:BSU23430-MONOMER"/>
<dbReference type="Proteomes" id="UP000001570">
    <property type="component" value="Chromosome"/>
</dbReference>
<dbReference type="GO" id="GO:0005886">
    <property type="term" value="C:plasma membrane"/>
    <property type="evidence" value="ECO:0007669"/>
    <property type="project" value="UniProtKB-SubCell"/>
</dbReference>
<dbReference type="GO" id="GO:0030435">
    <property type="term" value="P:sporulation resulting in formation of a cellular spore"/>
    <property type="evidence" value="ECO:0007669"/>
    <property type="project" value="UniProtKB-KW"/>
</dbReference>
<dbReference type="InterPro" id="IPR020144">
    <property type="entry name" value="SpoVAB"/>
</dbReference>
<dbReference type="Pfam" id="PF13782">
    <property type="entry name" value="SpoVAB"/>
    <property type="match status" value="1"/>
</dbReference>
<gene>
    <name type="primary">spoVAB</name>
    <name type="ordered locus">BSU23430</name>
</gene>
<comment type="subcellular location">
    <subcellularLocation>
        <location evidence="2">Cell membrane</location>
        <topology evidence="2">Multi-pass membrane protein</topology>
    </subcellularLocation>
</comment>
<name>SP5AB_BACSU</name>
<sequence>MIVSVLFIIFVGLGGGITVGAGFVAFLTVMGIIPRLMQLTKTMRFVQAYEAAVILGAVCGGWETLHMNHLYLTKWIAVPVGLLAGLFVGMLAAALTEVLNVLPILAKRIGLRSKIIILLMAIVIGKIAGSLFHWLYFIDHS</sequence>
<keyword id="KW-1003">Cell membrane</keyword>
<keyword id="KW-0472">Membrane</keyword>
<keyword id="KW-1185">Reference proteome</keyword>
<keyword id="KW-0749">Sporulation</keyword>
<keyword id="KW-0812">Transmembrane</keyword>
<keyword id="KW-1133">Transmembrane helix</keyword>
<accession>P40867</accession>
<proteinExistence type="predicted"/>
<reference key="1">
    <citation type="journal article" date="1985" name="J. Gen. Microbiol.">
        <title>Nucleotide sequence and complementation analysis of a polycistronic sporulation operon, spoVA, in Bacillus subtilis.</title>
        <authorList>
            <person name="Fort P."/>
            <person name="Errington J."/>
        </authorList>
    </citation>
    <scope>NUCLEOTIDE SEQUENCE [GENOMIC DNA]</scope>
</reference>
<reference key="2">
    <citation type="journal article" date="1996" name="Microbiology">
        <title>Systematic sequencing of the 283 kb 210 degrees-232 degrees region of the Bacillus subtilis genome containing the skin element and many sporulation genes.</title>
        <authorList>
            <person name="Mizuno M."/>
            <person name="Masuda S."/>
            <person name="Takemaru K."/>
            <person name="Hosono S."/>
            <person name="Sato T."/>
            <person name="Takeuchi M."/>
            <person name="Kobayashi Y."/>
        </authorList>
    </citation>
    <scope>NUCLEOTIDE SEQUENCE [GENOMIC DNA]</scope>
    <source>
        <strain>168 / JH642</strain>
    </source>
</reference>
<reference key="3">
    <citation type="journal article" date="1997" name="Nature">
        <title>The complete genome sequence of the Gram-positive bacterium Bacillus subtilis.</title>
        <authorList>
            <person name="Kunst F."/>
            <person name="Ogasawara N."/>
            <person name="Moszer I."/>
            <person name="Albertini A.M."/>
            <person name="Alloni G."/>
            <person name="Azevedo V."/>
            <person name="Bertero M.G."/>
            <person name="Bessieres P."/>
            <person name="Bolotin A."/>
            <person name="Borchert S."/>
            <person name="Borriss R."/>
            <person name="Boursier L."/>
            <person name="Brans A."/>
            <person name="Braun M."/>
            <person name="Brignell S.C."/>
            <person name="Bron S."/>
            <person name="Brouillet S."/>
            <person name="Bruschi C.V."/>
            <person name="Caldwell B."/>
            <person name="Capuano V."/>
            <person name="Carter N.M."/>
            <person name="Choi S.-K."/>
            <person name="Codani J.-J."/>
            <person name="Connerton I.F."/>
            <person name="Cummings N.J."/>
            <person name="Daniel R.A."/>
            <person name="Denizot F."/>
            <person name="Devine K.M."/>
            <person name="Duesterhoeft A."/>
            <person name="Ehrlich S.D."/>
            <person name="Emmerson P.T."/>
            <person name="Entian K.-D."/>
            <person name="Errington J."/>
            <person name="Fabret C."/>
            <person name="Ferrari E."/>
            <person name="Foulger D."/>
            <person name="Fritz C."/>
            <person name="Fujita M."/>
            <person name="Fujita Y."/>
            <person name="Fuma S."/>
            <person name="Galizzi A."/>
            <person name="Galleron N."/>
            <person name="Ghim S.-Y."/>
            <person name="Glaser P."/>
            <person name="Goffeau A."/>
            <person name="Golightly E.J."/>
            <person name="Grandi G."/>
            <person name="Guiseppi G."/>
            <person name="Guy B.J."/>
            <person name="Haga K."/>
            <person name="Haiech J."/>
            <person name="Harwood C.R."/>
            <person name="Henaut A."/>
            <person name="Hilbert H."/>
            <person name="Holsappel S."/>
            <person name="Hosono S."/>
            <person name="Hullo M.-F."/>
            <person name="Itaya M."/>
            <person name="Jones L.-M."/>
            <person name="Joris B."/>
            <person name="Karamata D."/>
            <person name="Kasahara Y."/>
            <person name="Klaerr-Blanchard M."/>
            <person name="Klein C."/>
            <person name="Kobayashi Y."/>
            <person name="Koetter P."/>
            <person name="Koningstein G."/>
            <person name="Krogh S."/>
            <person name="Kumano M."/>
            <person name="Kurita K."/>
            <person name="Lapidus A."/>
            <person name="Lardinois S."/>
            <person name="Lauber J."/>
            <person name="Lazarevic V."/>
            <person name="Lee S.-M."/>
            <person name="Levine A."/>
            <person name="Liu H."/>
            <person name="Masuda S."/>
            <person name="Mauel C."/>
            <person name="Medigue C."/>
            <person name="Medina N."/>
            <person name="Mellado R.P."/>
            <person name="Mizuno M."/>
            <person name="Moestl D."/>
            <person name="Nakai S."/>
            <person name="Noback M."/>
            <person name="Noone D."/>
            <person name="O'Reilly M."/>
            <person name="Ogawa K."/>
            <person name="Ogiwara A."/>
            <person name="Oudega B."/>
            <person name="Park S.-H."/>
            <person name="Parro V."/>
            <person name="Pohl T.M."/>
            <person name="Portetelle D."/>
            <person name="Porwollik S."/>
            <person name="Prescott A.M."/>
            <person name="Presecan E."/>
            <person name="Pujic P."/>
            <person name="Purnelle B."/>
            <person name="Rapoport G."/>
            <person name="Rey M."/>
            <person name="Reynolds S."/>
            <person name="Rieger M."/>
            <person name="Rivolta C."/>
            <person name="Rocha E."/>
            <person name="Roche B."/>
            <person name="Rose M."/>
            <person name="Sadaie Y."/>
            <person name="Sato T."/>
            <person name="Scanlan E."/>
            <person name="Schleich S."/>
            <person name="Schroeter R."/>
            <person name="Scoffone F."/>
            <person name="Sekiguchi J."/>
            <person name="Sekowska A."/>
            <person name="Seror S.J."/>
            <person name="Serror P."/>
            <person name="Shin B.-S."/>
            <person name="Soldo B."/>
            <person name="Sorokin A."/>
            <person name="Tacconi E."/>
            <person name="Takagi T."/>
            <person name="Takahashi H."/>
            <person name="Takemaru K."/>
            <person name="Takeuchi M."/>
            <person name="Tamakoshi A."/>
            <person name="Tanaka T."/>
            <person name="Terpstra P."/>
            <person name="Tognoni A."/>
            <person name="Tosato V."/>
            <person name="Uchiyama S."/>
            <person name="Vandenbol M."/>
            <person name="Vannier F."/>
            <person name="Vassarotti A."/>
            <person name="Viari A."/>
            <person name="Wambutt R."/>
            <person name="Wedler E."/>
            <person name="Wedler H."/>
            <person name="Weitzenegger T."/>
            <person name="Winters P."/>
            <person name="Wipat A."/>
            <person name="Yamamoto H."/>
            <person name="Yamane K."/>
            <person name="Yasumoto K."/>
            <person name="Yata K."/>
            <person name="Yoshida K."/>
            <person name="Yoshikawa H.-F."/>
            <person name="Zumstein E."/>
            <person name="Yoshikawa H."/>
            <person name="Danchin A."/>
        </authorList>
    </citation>
    <scope>NUCLEOTIDE SEQUENCE [LARGE SCALE GENOMIC DNA]</scope>
    <source>
        <strain>168</strain>
    </source>
</reference>
<protein>
    <recommendedName>
        <fullName>Stage V sporulation protein AB</fullName>
    </recommendedName>
</protein>